<dbReference type="SMR" id="P0DP48"/>
<dbReference type="GO" id="GO:0005576">
    <property type="term" value="C:extracellular region"/>
    <property type="evidence" value="ECO:0007669"/>
    <property type="project" value="UniProtKB-SubCell"/>
</dbReference>
<dbReference type="GO" id="GO:0099106">
    <property type="term" value="F:ion channel regulator activity"/>
    <property type="evidence" value="ECO:0007669"/>
    <property type="project" value="UniProtKB-KW"/>
</dbReference>
<dbReference type="GO" id="GO:0090729">
    <property type="term" value="F:toxin activity"/>
    <property type="evidence" value="ECO:0007669"/>
    <property type="project" value="UniProtKB-KW"/>
</dbReference>
<dbReference type="Gene3D" id="6.20.10.10">
    <property type="match status" value="2"/>
</dbReference>
<dbReference type="SUPFAM" id="SSF57059">
    <property type="entry name" value="omega toxin-like"/>
    <property type="match status" value="2"/>
</dbReference>
<organism>
    <name type="scientific">Hadronyche infensa</name>
    <name type="common">Fraser island funnel-web spider</name>
    <name type="synonym">Atrax infensus</name>
    <dbReference type="NCBI Taxonomy" id="153481"/>
    <lineage>
        <taxon>Eukaryota</taxon>
        <taxon>Metazoa</taxon>
        <taxon>Ecdysozoa</taxon>
        <taxon>Arthropoda</taxon>
        <taxon>Chelicerata</taxon>
        <taxon>Arachnida</taxon>
        <taxon>Araneae</taxon>
        <taxon>Mygalomorphae</taxon>
        <taxon>Hexathelidae</taxon>
        <taxon>Hadronyche</taxon>
    </lineage>
</organism>
<reference key="1">
    <citation type="journal article" date="2017" name="Proc. Natl. Acad. Sci. U.S.A.">
        <title>Potent neuroprotection after stroke afforded by a double-knot spider-venom peptide that inhibits acid-sensing ion channel 1a.</title>
        <authorList>
            <person name="Chassagnon I.R."/>
            <person name="McCarthy C.A."/>
            <person name="Chin Y.K."/>
            <person name="Pineda S.S."/>
            <person name="Keramidas A."/>
            <person name="Mobli M."/>
            <person name="Pham V."/>
            <person name="De Silva T.M."/>
            <person name="Lynch J.W."/>
            <person name="Widdop R.E."/>
            <person name="Rash L.D."/>
            <person name="King G.F."/>
        </authorList>
    </citation>
    <scope>NUCLEOTIDE SEQUENCE [MRNA]</scope>
    <source>
        <tissue>Venom gland</tissue>
    </source>
</reference>
<sequence>NECIRKWLSCVDRKNDCCEGLECYKRRHSFEVCVPIPGFCLVKWKQCDGRERDCCAGLECWKRSGNKSSVCAPIA</sequence>
<protein>
    <recommendedName>
        <fullName evidence="3">Pi-hexatoxin-Hi1d</fullName>
        <shortName evidence="3">Pi-HXTX-Hi1d</shortName>
    </recommendedName>
    <alternativeName>
        <fullName evidence="4">Double-knot toxin</fullName>
        <shortName evidence="4">DkTx</shortName>
    </alternativeName>
</protein>
<evidence type="ECO:0000250" key="1">
    <source>
        <dbReference type="UniProtKB" id="A0A1L1QJU3"/>
    </source>
</evidence>
<evidence type="ECO:0000250" key="2">
    <source>
        <dbReference type="UniProtKB" id="P60514"/>
    </source>
</evidence>
<evidence type="ECO:0000303" key="3">
    <source>
    </source>
</evidence>
<evidence type="ECO:0000305" key="4"/>
<evidence type="ECO:0000305" key="5">
    <source>
    </source>
</evidence>
<comment type="function">
    <text evidence="1">This toxin potently and selectively inhibits ASIC1a, an isoform of the gene ASIC1. It incompletely inhibits ASIC1a activation in a pH-independent and slowly reversible manner. This toxin acts by binding to and stabilizing the closed state of the channel, thereby impeding the transition into a conducting state. This toxin may bind to the acidic pocket of ASIC1a, since mutation of a key residue of this pocket (Arg-350) abolishes the ability of the toxin to inhibit ASIC1a. In vivo, this toxin protects the brain from neuronal injury when administered up to 8 hours after stroke onset.</text>
</comment>
<comment type="subcellular location">
    <subcellularLocation>
        <location evidence="2">Secreted</location>
    </subcellularLocation>
</comment>
<comment type="tissue specificity">
    <text evidence="5">Expressed by the venom gland.</text>
</comment>
<comment type="domain">
    <text evidence="4">The presence of a 'disulfide through disulfide knot' structurally defines this protein as a knottin. This toxin contains 2 'disulfide through disulfide knots' that are separated by a short linker.</text>
</comment>
<comment type="similarity">
    <text evidence="4">Belongs to the psalmotoxin-1 family. Double-knot toxin subfamily.</text>
</comment>
<keyword id="KW-1015">Disulfide bond</keyword>
<keyword id="KW-0872">Ion channel impairing toxin</keyword>
<keyword id="KW-1275">Proton-gated sodium channel impairing toxin</keyword>
<keyword id="KW-0677">Repeat</keyword>
<keyword id="KW-0964">Secreted</keyword>
<keyword id="KW-0800">Toxin</keyword>
<proteinExistence type="inferred from homology"/>
<accession>P0DP48</accession>
<name>TP1D_HADIN</name>
<feature type="chain" id="PRO_0000440134" description="Pi-hexatoxin-Hi1d" evidence="5">
    <location>
        <begin position="1"/>
        <end position="75"/>
    </location>
</feature>
<feature type="repeat" description="Domain 1" evidence="1">
    <location>
        <begin position="3"/>
        <end position="33"/>
    </location>
</feature>
<feature type="repeat" description="Domain 2" evidence="1">
    <location>
        <begin position="40"/>
        <end position="71"/>
    </location>
</feature>
<feature type="region of interest" description="2 X approximate repeats with cysteine pattern C-C-CC-C-C" evidence="1">
    <location>
        <begin position="3"/>
        <end position="71"/>
    </location>
</feature>
<feature type="disulfide bond" evidence="1">
    <location>
        <begin position="3"/>
        <end position="18"/>
    </location>
</feature>
<feature type="disulfide bond" evidence="1">
    <location>
        <begin position="10"/>
        <end position="23"/>
    </location>
</feature>
<feature type="disulfide bond" evidence="1">
    <location>
        <begin position="17"/>
        <end position="33"/>
    </location>
</feature>
<feature type="disulfide bond" evidence="1">
    <location>
        <begin position="40"/>
        <end position="55"/>
    </location>
</feature>
<feature type="disulfide bond" evidence="1">
    <location>
        <begin position="47"/>
        <end position="60"/>
    </location>
</feature>
<feature type="disulfide bond" evidence="1">
    <location>
        <begin position="54"/>
        <end position="71"/>
    </location>
</feature>